<protein>
    <recommendedName>
        <fullName>Bromodomain-containing protein DDB_G0278469</fullName>
    </recommendedName>
</protein>
<gene>
    <name type="ORF">DDB_G0278469</name>
</gene>
<proteinExistence type="predicted"/>
<dbReference type="EMBL" id="AAFI02000023">
    <property type="protein sequence ID" value="EAL68407.1"/>
    <property type="molecule type" value="Genomic_DNA"/>
</dbReference>
<dbReference type="RefSeq" id="XP_642384.1">
    <property type="nucleotide sequence ID" value="XM_637292.1"/>
</dbReference>
<dbReference type="SMR" id="Q54Y18"/>
<dbReference type="FunCoup" id="Q54Y18">
    <property type="interactions" value="640"/>
</dbReference>
<dbReference type="STRING" id="44689.Q54Y18"/>
<dbReference type="PaxDb" id="44689-DDB0220703"/>
<dbReference type="EnsemblProtists" id="EAL68407">
    <property type="protein sequence ID" value="EAL68407"/>
    <property type="gene ID" value="DDB_G0278469"/>
</dbReference>
<dbReference type="GeneID" id="8621589"/>
<dbReference type="KEGG" id="ddi:DDB_G0278469"/>
<dbReference type="dictyBase" id="DDB_G0278469"/>
<dbReference type="VEuPathDB" id="AmoebaDB:DDB_G0278469"/>
<dbReference type="HOGENOM" id="CLU_380118_0_0_1"/>
<dbReference type="InParanoid" id="Q54Y18"/>
<dbReference type="OMA" id="KANTHEE"/>
<dbReference type="PRO" id="PR:Q54Y18"/>
<dbReference type="Proteomes" id="UP000002195">
    <property type="component" value="Chromosome 3"/>
</dbReference>
<dbReference type="CDD" id="cd04369">
    <property type="entry name" value="Bromodomain"/>
    <property type="match status" value="1"/>
</dbReference>
<dbReference type="Gene3D" id="2.60.200.20">
    <property type="match status" value="1"/>
</dbReference>
<dbReference type="Gene3D" id="1.20.920.10">
    <property type="entry name" value="Bromodomain-like"/>
    <property type="match status" value="1"/>
</dbReference>
<dbReference type="InterPro" id="IPR001487">
    <property type="entry name" value="Bromodomain"/>
</dbReference>
<dbReference type="InterPro" id="IPR036427">
    <property type="entry name" value="Bromodomain-like_sf"/>
</dbReference>
<dbReference type="InterPro" id="IPR000253">
    <property type="entry name" value="FHA_dom"/>
</dbReference>
<dbReference type="InterPro" id="IPR008984">
    <property type="entry name" value="SMAD_FHA_dom_sf"/>
</dbReference>
<dbReference type="PANTHER" id="PTHR14312:SF1">
    <property type="entry name" value="BASIC-LEUCINE ZIPPER TRANSCRIPTION FACTOR A"/>
    <property type="match status" value="1"/>
</dbReference>
<dbReference type="PANTHER" id="PTHR14312">
    <property type="entry name" value="CREB/ATF BZIP TRANSCRIPTION FACTOR"/>
    <property type="match status" value="1"/>
</dbReference>
<dbReference type="Pfam" id="PF00439">
    <property type="entry name" value="Bromodomain"/>
    <property type="match status" value="1"/>
</dbReference>
<dbReference type="Pfam" id="PF00498">
    <property type="entry name" value="FHA"/>
    <property type="match status" value="1"/>
</dbReference>
<dbReference type="SUPFAM" id="SSF47370">
    <property type="entry name" value="Bromodomain"/>
    <property type="match status" value="1"/>
</dbReference>
<dbReference type="SUPFAM" id="SSF49879">
    <property type="entry name" value="SMAD/FHA domain"/>
    <property type="match status" value="1"/>
</dbReference>
<dbReference type="PROSITE" id="PS50014">
    <property type="entry name" value="BROMODOMAIN_2"/>
    <property type="match status" value="1"/>
</dbReference>
<accession>Q54Y18</accession>
<keyword id="KW-0103">Bromodomain</keyword>
<keyword id="KW-0175">Coiled coil</keyword>
<keyword id="KW-1185">Reference proteome</keyword>
<evidence type="ECO:0000255" key="1"/>
<evidence type="ECO:0000255" key="2">
    <source>
        <dbReference type="PROSITE-ProRule" id="PRU00035"/>
    </source>
</evidence>
<evidence type="ECO:0000256" key="3">
    <source>
        <dbReference type="SAM" id="MobiDB-lite"/>
    </source>
</evidence>
<feature type="chain" id="PRO_0000388243" description="Bromodomain-containing protein DDB_G0278469">
    <location>
        <begin position="1"/>
        <end position="715"/>
    </location>
</feature>
<feature type="domain" description="Bromo" evidence="2">
    <location>
        <begin position="474"/>
        <end position="599"/>
    </location>
</feature>
<feature type="region of interest" description="Disordered" evidence="3">
    <location>
        <begin position="18"/>
        <end position="46"/>
    </location>
</feature>
<feature type="region of interest" description="Disordered" evidence="3">
    <location>
        <begin position="186"/>
        <end position="425"/>
    </location>
</feature>
<feature type="region of interest" description="Disordered" evidence="3">
    <location>
        <begin position="653"/>
        <end position="715"/>
    </location>
</feature>
<feature type="coiled-coil region" evidence="1">
    <location>
        <begin position="322"/>
        <end position="368"/>
    </location>
</feature>
<feature type="coiled-coil region" evidence="1">
    <location>
        <begin position="437"/>
        <end position="470"/>
    </location>
</feature>
<feature type="compositionally biased region" description="Low complexity" evidence="3">
    <location>
        <begin position="20"/>
        <end position="45"/>
    </location>
</feature>
<feature type="compositionally biased region" description="Low complexity" evidence="3">
    <location>
        <begin position="186"/>
        <end position="204"/>
    </location>
</feature>
<feature type="compositionally biased region" description="Low complexity" evidence="3">
    <location>
        <begin position="215"/>
        <end position="227"/>
    </location>
</feature>
<feature type="compositionally biased region" description="Low complexity" evidence="3">
    <location>
        <begin position="234"/>
        <end position="254"/>
    </location>
</feature>
<feature type="compositionally biased region" description="Low complexity" evidence="3">
    <location>
        <begin position="261"/>
        <end position="281"/>
    </location>
</feature>
<feature type="compositionally biased region" description="Basic and acidic residues" evidence="3">
    <location>
        <begin position="307"/>
        <end position="316"/>
    </location>
</feature>
<feature type="compositionally biased region" description="Acidic residues" evidence="3">
    <location>
        <begin position="332"/>
        <end position="359"/>
    </location>
</feature>
<feature type="compositionally biased region" description="Polar residues" evidence="3">
    <location>
        <begin position="366"/>
        <end position="389"/>
    </location>
</feature>
<feature type="compositionally biased region" description="Low complexity" evidence="3">
    <location>
        <begin position="405"/>
        <end position="414"/>
    </location>
</feature>
<feature type="compositionally biased region" description="Polar residues" evidence="3">
    <location>
        <begin position="662"/>
        <end position="672"/>
    </location>
</feature>
<feature type="compositionally biased region" description="Acidic residues" evidence="3">
    <location>
        <begin position="684"/>
        <end position="715"/>
    </location>
</feature>
<sequence>MEDISTIKKLEGLSVHCEDNNNNNNNNNNKENINNDDNNINPNRNATSSLLKGNIQQVKKKKVFARLHLFNRDGTVKQIVEMRKYKFIIGSDQKSTDILITRPGVYSNHAEIIYDKEVRKFYLNPLVDPSISDTIRINFIPFINKKEVLGNNDIISIGLRAFRIEFFAPVYVDNLILPKNIQPQQQQQKQQQQQQQQQQAPTAQKKLKQEVEHILTAATTTPTTTTTKPKKLKTAPPTTVASSSTIPKTTTTKKQAIEQPSKSNLKSSQNKLSTTTTTTITSKPPLNKSSIDGDTRSESSKALQGLKPKEQKKDIMKSLISSKKANTHEEKEEGESEEEEEEEEEEEEEEEEEEEEEQLEDKQKQTKTPISQNKSASSNIKPLSKTSKSNPPPLSAATKSNPVVKKITSTTVTRTTKKADTETKQEIKITKSSTTTKQQTQEEIEQELKLESIRKRIEQFINKFEKEINDNDFKDLDEGKRKIKESLDFISKTKYEFQGTTSNPGDVESTPLDKWFKNIPYEDFVDSFKLKYYSIITEPVSITSILNKLKSGPNYQLAEVLKDFKQMLINVTLYHKEPNEYWWISHQCNIQFYKSLLETGLITQDQYQIQYQTSNNEIVKLDKTLNLVPKLVVVENNDEDDNNDDEGSKKAVLVDEDEDECLNNQNNPTTYDSDGDFVTKQSDQESDEESDEESDEESDEERDQLSEEEDQEATN</sequence>
<name>Y8469_DICDI</name>
<organism>
    <name type="scientific">Dictyostelium discoideum</name>
    <name type="common">Social amoeba</name>
    <dbReference type="NCBI Taxonomy" id="44689"/>
    <lineage>
        <taxon>Eukaryota</taxon>
        <taxon>Amoebozoa</taxon>
        <taxon>Evosea</taxon>
        <taxon>Eumycetozoa</taxon>
        <taxon>Dictyostelia</taxon>
        <taxon>Dictyosteliales</taxon>
        <taxon>Dictyosteliaceae</taxon>
        <taxon>Dictyostelium</taxon>
    </lineage>
</organism>
<reference key="1">
    <citation type="journal article" date="2005" name="Nature">
        <title>The genome of the social amoeba Dictyostelium discoideum.</title>
        <authorList>
            <person name="Eichinger L."/>
            <person name="Pachebat J.A."/>
            <person name="Gloeckner G."/>
            <person name="Rajandream M.A."/>
            <person name="Sucgang R."/>
            <person name="Berriman M."/>
            <person name="Song J."/>
            <person name="Olsen R."/>
            <person name="Szafranski K."/>
            <person name="Xu Q."/>
            <person name="Tunggal B."/>
            <person name="Kummerfeld S."/>
            <person name="Madera M."/>
            <person name="Konfortov B.A."/>
            <person name="Rivero F."/>
            <person name="Bankier A.T."/>
            <person name="Lehmann R."/>
            <person name="Hamlin N."/>
            <person name="Davies R."/>
            <person name="Gaudet P."/>
            <person name="Fey P."/>
            <person name="Pilcher K."/>
            <person name="Chen G."/>
            <person name="Saunders D."/>
            <person name="Sodergren E.J."/>
            <person name="Davis P."/>
            <person name="Kerhornou A."/>
            <person name="Nie X."/>
            <person name="Hall N."/>
            <person name="Anjard C."/>
            <person name="Hemphill L."/>
            <person name="Bason N."/>
            <person name="Farbrother P."/>
            <person name="Desany B."/>
            <person name="Just E."/>
            <person name="Morio T."/>
            <person name="Rost R."/>
            <person name="Churcher C.M."/>
            <person name="Cooper J."/>
            <person name="Haydock S."/>
            <person name="van Driessche N."/>
            <person name="Cronin A."/>
            <person name="Goodhead I."/>
            <person name="Muzny D.M."/>
            <person name="Mourier T."/>
            <person name="Pain A."/>
            <person name="Lu M."/>
            <person name="Harper D."/>
            <person name="Lindsay R."/>
            <person name="Hauser H."/>
            <person name="James K.D."/>
            <person name="Quiles M."/>
            <person name="Madan Babu M."/>
            <person name="Saito T."/>
            <person name="Buchrieser C."/>
            <person name="Wardroper A."/>
            <person name="Felder M."/>
            <person name="Thangavelu M."/>
            <person name="Johnson D."/>
            <person name="Knights A."/>
            <person name="Loulseged H."/>
            <person name="Mungall K.L."/>
            <person name="Oliver K."/>
            <person name="Price C."/>
            <person name="Quail M.A."/>
            <person name="Urushihara H."/>
            <person name="Hernandez J."/>
            <person name="Rabbinowitsch E."/>
            <person name="Steffen D."/>
            <person name="Sanders M."/>
            <person name="Ma J."/>
            <person name="Kohara Y."/>
            <person name="Sharp S."/>
            <person name="Simmonds M.N."/>
            <person name="Spiegler S."/>
            <person name="Tivey A."/>
            <person name="Sugano S."/>
            <person name="White B."/>
            <person name="Walker D."/>
            <person name="Woodward J.R."/>
            <person name="Winckler T."/>
            <person name="Tanaka Y."/>
            <person name="Shaulsky G."/>
            <person name="Schleicher M."/>
            <person name="Weinstock G.M."/>
            <person name="Rosenthal A."/>
            <person name="Cox E.C."/>
            <person name="Chisholm R.L."/>
            <person name="Gibbs R.A."/>
            <person name="Loomis W.F."/>
            <person name="Platzer M."/>
            <person name="Kay R.R."/>
            <person name="Williams J.G."/>
            <person name="Dear P.H."/>
            <person name="Noegel A.A."/>
            <person name="Barrell B.G."/>
            <person name="Kuspa A."/>
        </authorList>
    </citation>
    <scope>NUCLEOTIDE SEQUENCE [LARGE SCALE GENOMIC DNA]</scope>
    <source>
        <strain>AX4</strain>
    </source>
</reference>